<reference key="1">
    <citation type="journal article" date="1996" name="Gene">
        <title>Cloning and sequencing of a cDNA encoding bovine intercellular adhesion molecule 3 (ICAM-3).</title>
        <authorList>
            <person name="Lee E.K."/>
            <person name="Kehrli M.E. Jr."/>
            <person name="Dietz A.B."/>
            <person name="Bosworth B.T."/>
            <person name="Reinhardt T.A."/>
        </authorList>
    </citation>
    <scope>NUCLEOTIDE SEQUENCE [MRNA]</scope>
    <source>
        <strain>Holstein</strain>
        <tissue>Lymph node</tissue>
        <tissue>Mammary gland</tissue>
    </source>
</reference>
<feature type="signal peptide" evidence="3">
    <location>
        <begin position="1"/>
        <end position="31"/>
    </location>
</feature>
<feature type="chain" id="PRO_0000014793" description="Intercellular adhesion molecule 3">
    <location>
        <begin position="32"/>
        <end position="544"/>
    </location>
</feature>
<feature type="topological domain" description="Extracellular" evidence="3">
    <location>
        <begin position="32"/>
        <end position="486"/>
    </location>
</feature>
<feature type="transmembrane region" description="Helical" evidence="3">
    <location>
        <begin position="487"/>
        <end position="511"/>
    </location>
</feature>
<feature type="topological domain" description="Cytoplasmic" evidence="3">
    <location>
        <begin position="512"/>
        <end position="544"/>
    </location>
</feature>
<feature type="domain" description="Ig-like C2-type 1">
    <location>
        <begin position="48"/>
        <end position="105"/>
    </location>
</feature>
<feature type="domain" description="Ig-like C2-type 2">
    <location>
        <begin position="134"/>
        <end position="200"/>
    </location>
</feature>
<feature type="domain" description="Ig-like C2-type 3">
    <location>
        <begin position="237"/>
        <end position="302"/>
    </location>
</feature>
<feature type="domain" description="Ig-like C2-type 4">
    <location>
        <begin position="330"/>
        <end position="383"/>
    </location>
</feature>
<feature type="domain" description="Ig-like C2-type 5">
    <location>
        <begin position="417"/>
        <end position="470"/>
    </location>
</feature>
<feature type="glycosylation site" description="N-linked (GlcNAc...) asparagine" evidence="3">
    <location>
        <position position="54"/>
    </location>
</feature>
<feature type="glycosylation site" description="N-linked (GlcNAc...) asparagine" evidence="3">
    <location>
        <position position="89"/>
    </location>
</feature>
<feature type="glycosylation site" description="N-linked (GlcNAc...) asparagine" evidence="3">
    <location>
        <position position="103"/>
    </location>
</feature>
<feature type="glycosylation site" description="N-linked (GlcNAc...) asparagine" evidence="3">
    <location>
        <position position="112"/>
    </location>
</feature>
<feature type="glycosylation site" description="N-linked (GlcNAc...) asparagine" evidence="3">
    <location>
        <position position="138"/>
    </location>
</feature>
<feature type="glycosylation site" description="N-linked (GlcNAc...) asparagine" evidence="3">
    <location>
        <position position="190"/>
    </location>
</feature>
<feature type="glycosylation site" description="N-linked (GlcNAc...) asparagine" evidence="3">
    <location>
        <position position="209"/>
    </location>
</feature>
<feature type="glycosylation site" description="N-linked (GlcNAc...) asparagine" evidence="3">
    <location>
        <position position="243"/>
    </location>
</feature>
<feature type="glycosylation site" description="N-linked (GlcNAc...) asparagine" evidence="3">
    <location>
        <position position="267"/>
    </location>
</feature>
<feature type="glycosylation site" description="N-linked (GlcNAc...) asparagine" evidence="3">
    <location>
        <position position="296"/>
    </location>
</feature>
<feature type="glycosylation site" description="N-linked (GlcNAc...) asparagine" evidence="3">
    <location>
        <position position="321"/>
    </location>
</feature>
<feature type="glycosylation site" description="N-linked (GlcNAc...) asparagine" evidence="3">
    <location>
        <position position="326"/>
    </location>
</feature>
<feature type="glycosylation site" description="N-linked (GlcNAc...) asparagine" evidence="3">
    <location>
        <position position="377"/>
    </location>
</feature>
<feature type="glycosylation site" description="N-linked (GlcNAc...) asparagine" evidence="3">
    <location>
        <position position="390"/>
    </location>
</feature>
<feature type="glycosylation site" description="N-linked (GlcNAc...) asparagine" evidence="3">
    <location>
        <position position="456"/>
    </location>
</feature>
<feature type="disulfide bond" evidence="2 4">
    <location>
        <begin position="55"/>
        <end position="98"/>
    </location>
</feature>
<feature type="disulfide bond" evidence="1">
    <location>
        <begin position="59"/>
        <end position="102"/>
    </location>
</feature>
<feature type="disulfide bond" evidence="1">
    <location>
        <begin position="141"/>
        <end position="193"/>
    </location>
</feature>
<feature type="disulfide bond" evidence="3">
    <location>
        <begin position="244"/>
        <end position="295"/>
    </location>
</feature>
<feature type="disulfide bond" evidence="3">
    <location>
        <begin position="337"/>
        <end position="376"/>
    </location>
</feature>
<feature type="disulfide bond" evidence="3">
    <location>
        <begin position="424"/>
        <end position="463"/>
    </location>
</feature>
<proteinExistence type="evidence at transcript level"/>
<name>ICAM3_BOVIN</name>
<keyword id="KW-0130">Cell adhesion</keyword>
<keyword id="KW-1015">Disulfide bond</keyword>
<keyword id="KW-0325">Glycoprotein</keyword>
<keyword id="KW-0393">Immunoglobulin domain</keyword>
<keyword id="KW-0472">Membrane</keyword>
<keyword id="KW-0581">Phagocytosis</keyword>
<keyword id="KW-1185">Reference proteome</keyword>
<keyword id="KW-0677">Repeat</keyword>
<keyword id="KW-0732">Signal</keyword>
<keyword id="KW-0812">Transmembrane</keyword>
<keyword id="KW-1133">Transmembrane helix</keyword>
<gene>
    <name type="primary">ICAM3</name>
</gene>
<comment type="function">
    <text evidence="2">ICAM proteins are ligands for the leukocyte adhesion protein LFA-1 (integrin alpha-L/beta-2). ICAM3 is also a ligand for integrin alpha-D/beta-2. In association with integrin alpha-L/beta-2, contributes to apoptotic neutrophil phagocytosis by macrophages.</text>
</comment>
<comment type="subunit">
    <text evidence="2">Interacts with moesin/MSN.</text>
</comment>
<comment type="subcellular location">
    <subcellularLocation>
        <location>Membrane</location>
        <topology>Single-pass type I membrane protein</topology>
    </subcellularLocation>
</comment>
<comment type="tissue specificity">
    <text evidence="2">Leukocytes.</text>
</comment>
<comment type="similarity">
    <text evidence="5">Belongs to the immunoglobulin superfamily. ICAM family.</text>
</comment>
<protein>
    <recommendedName>
        <fullName>Intercellular adhesion molecule 3</fullName>
        <shortName>ICAM-3</shortName>
    </recommendedName>
    <cdAntigenName>CD50</cdAntigenName>
</protein>
<sequence length="544" mass="59735">MIASGPPPRVYWTSLIFLLLACCLLPTGAQGQTYQVRVEPKDPVVPFGEPLVVNCTLDCPGPGLISLETALSKEPHSRGLGWAAFRLTNVTGDMEILCSGICNKSQVVGFSNITVFGFPKRVELAPLPLWQPVGEELNLSCLVSGGAPRAHLSVVLLRGEEELGRQPLGKEEPAKVTFMVQPRREDHGTNFSCRSELDLRSQGLELFQNTSAPRKLQTYAMPKTAPRLVFPRFWEMETSWPVNCSLNGLFPASEAHIQLALGNQMLNATVVSHADTLTATATAKTEQEGTQEIVCNVTLGVENRETRESLVAYRFQGPNLNLSESNATEGTPVTVTCAAGPQVQVMLDGVPAAVPGQPAQLQLKATEMDDRRTFFCNATLKVHGVTLHRNRSIQLRVLYGPTIDRAKCPQRLMWKEKTMHILQCQARGNPNPQLQCLREGSKFKVPVGIPFLVLLNYSGTYSCQAASSRGTDKMLVMMDVQGRNPVTINIVLGVLAILGLVTLAAASVYVFWVQRQHDIYHLTPRSTRWRLTSTQPVTVAEELS</sequence>
<accession>Q28125</accession>
<evidence type="ECO:0000250" key="1">
    <source>
        <dbReference type="UniProtKB" id="P13598"/>
    </source>
</evidence>
<evidence type="ECO:0000250" key="2">
    <source>
        <dbReference type="UniProtKB" id="P32942"/>
    </source>
</evidence>
<evidence type="ECO:0000255" key="3"/>
<evidence type="ECO:0000255" key="4">
    <source>
        <dbReference type="PROSITE-ProRule" id="PRU00114"/>
    </source>
</evidence>
<evidence type="ECO:0000305" key="5"/>
<organism>
    <name type="scientific">Bos taurus</name>
    <name type="common">Bovine</name>
    <dbReference type="NCBI Taxonomy" id="9913"/>
    <lineage>
        <taxon>Eukaryota</taxon>
        <taxon>Metazoa</taxon>
        <taxon>Chordata</taxon>
        <taxon>Craniata</taxon>
        <taxon>Vertebrata</taxon>
        <taxon>Euteleostomi</taxon>
        <taxon>Mammalia</taxon>
        <taxon>Eutheria</taxon>
        <taxon>Laurasiatheria</taxon>
        <taxon>Artiodactyla</taxon>
        <taxon>Ruminantia</taxon>
        <taxon>Pecora</taxon>
        <taxon>Bovidae</taxon>
        <taxon>Bovinae</taxon>
        <taxon>Bos</taxon>
    </lineage>
</organism>
<dbReference type="EMBL" id="L41844">
    <property type="protein sequence ID" value="AAB39264.1"/>
    <property type="molecule type" value="mRNA"/>
</dbReference>
<dbReference type="PIR" id="JC5018">
    <property type="entry name" value="JC5018"/>
</dbReference>
<dbReference type="RefSeq" id="NP_776774.1">
    <property type="nucleotide sequence ID" value="NM_174349.1"/>
</dbReference>
<dbReference type="SMR" id="Q28125"/>
<dbReference type="FunCoup" id="Q28125">
    <property type="interactions" value="201"/>
</dbReference>
<dbReference type="STRING" id="9913.ENSBTAP00000020903"/>
<dbReference type="GlyCosmos" id="Q28125">
    <property type="glycosylation" value="15 sites, No reported glycans"/>
</dbReference>
<dbReference type="GlyGen" id="Q28125">
    <property type="glycosylation" value="15 sites"/>
</dbReference>
<dbReference type="PaxDb" id="9913-ENSBTAP00000020903"/>
<dbReference type="GeneID" id="281840"/>
<dbReference type="KEGG" id="bta:281840"/>
<dbReference type="CTD" id="3385"/>
<dbReference type="eggNOG" id="ENOG502RZRA">
    <property type="taxonomic scope" value="Eukaryota"/>
</dbReference>
<dbReference type="InParanoid" id="Q28125"/>
<dbReference type="OrthoDB" id="6250964at2759"/>
<dbReference type="Proteomes" id="UP000009136">
    <property type="component" value="Unplaced"/>
</dbReference>
<dbReference type="GO" id="GO:0005886">
    <property type="term" value="C:plasma membrane"/>
    <property type="evidence" value="ECO:0000318"/>
    <property type="project" value="GO_Central"/>
</dbReference>
<dbReference type="GO" id="GO:0005178">
    <property type="term" value="F:integrin binding"/>
    <property type="evidence" value="ECO:0000318"/>
    <property type="project" value="GO_Central"/>
</dbReference>
<dbReference type="GO" id="GO:0007155">
    <property type="term" value="P:cell adhesion"/>
    <property type="evidence" value="ECO:0000318"/>
    <property type="project" value="GO_Central"/>
</dbReference>
<dbReference type="GO" id="GO:0098609">
    <property type="term" value="P:cell-cell adhesion"/>
    <property type="evidence" value="ECO:0007669"/>
    <property type="project" value="InterPro"/>
</dbReference>
<dbReference type="GO" id="GO:0006909">
    <property type="term" value="P:phagocytosis"/>
    <property type="evidence" value="ECO:0007669"/>
    <property type="project" value="UniProtKB-KW"/>
</dbReference>
<dbReference type="CDD" id="cd00096">
    <property type="entry name" value="Ig"/>
    <property type="match status" value="1"/>
</dbReference>
<dbReference type="CDD" id="cd20997">
    <property type="entry name" value="IgI_N_ICAM-3"/>
    <property type="match status" value="1"/>
</dbReference>
<dbReference type="FunFam" id="2.60.40.10:FF:000194">
    <property type="entry name" value="Intercellular adhesion molecule 1"/>
    <property type="match status" value="1"/>
</dbReference>
<dbReference type="FunFam" id="2.60.40.10:FF:000459">
    <property type="entry name" value="Intercellular adhesion molecule 1"/>
    <property type="match status" value="1"/>
</dbReference>
<dbReference type="FunFam" id="2.60.40.10:FF:000641">
    <property type="entry name" value="Intercellular adhesion molecule 1"/>
    <property type="match status" value="1"/>
</dbReference>
<dbReference type="FunFam" id="2.60.40.10:FF:000648">
    <property type="entry name" value="Intercellular adhesion molecule 1"/>
    <property type="match status" value="1"/>
</dbReference>
<dbReference type="FunFam" id="2.60.40.10:FF:000338">
    <property type="entry name" value="intercellular adhesion molecule 5"/>
    <property type="match status" value="1"/>
</dbReference>
<dbReference type="Gene3D" id="2.60.40.10">
    <property type="entry name" value="Immunoglobulins"/>
    <property type="match status" value="5"/>
</dbReference>
<dbReference type="InterPro" id="IPR003988">
    <property type="entry name" value="ICAM"/>
</dbReference>
<dbReference type="InterPro" id="IPR048679">
    <property type="entry name" value="ICAM1_3_5_D2"/>
</dbReference>
<dbReference type="InterPro" id="IPR013768">
    <property type="entry name" value="ICAM_N"/>
</dbReference>
<dbReference type="InterPro" id="IPR047012">
    <property type="entry name" value="ICAM_VCAM"/>
</dbReference>
<dbReference type="InterPro" id="IPR003987">
    <property type="entry name" value="ICAM_VCAM_N"/>
</dbReference>
<dbReference type="InterPro" id="IPR036179">
    <property type="entry name" value="Ig-like_dom_sf"/>
</dbReference>
<dbReference type="InterPro" id="IPR013783">
    <property type="entry name" value="Ig-like_fold"/>
</dbReference>
<dbReference type="InterPro" id="IPR003599">
    <property type="entry name" value="Ig_sub"/>
</dbReference>
<dbReference type="PANTHER" id="PTHR13771">
    <property type="entry name" value="INTERCELLULAR ADHESION MOLECULE"/>
    <property type="match status" value="1"/>
</dbReference>
<dbReference type="PANTHER" id="PTHR13771:SF17">
    <property type="entry name" value="INTERCELLULAR ADHESION MOLECULE 3"/>
    <property type="match status" value="1"/>
</dbReference>
<dbReference type="Pfam" id="PF21146">
    <property type="entry name" value="ICAM1_3_5_D2"/>
    <property type="match status" value="1"/>
</dbReference>
<dbReference type="Pfam" id="PF03921">
    <property type="entry name" value="ICAM_N"/>
    <property type="match status" value="1"/>
</dbReference>
<dbReference type="PRINTS" id="PR01473">
    <property type="entry name" value="ICAM"/>
</dbReference>
<dbReference type="PRINTS" id="PR01472">
    <property type="entry name" value="ICAMVCAM1"/>
</dbReference>
<dbReference type="SMART" id="SM00409">
    <property type="entry name" value="IG"/>
    <property type="match status" value="4"/>
</dbReference>
<dbReference type="SUPFAM" id="SSF48726">
    <property type="entry name" value="Immunoglobulin"/>
    <property type="match status" value="5"/>
</dbReference>